<organism>
    <name type="scientific">Burkholderia lata (strain ATCC 17760 / DSM 23089 / LMG 22485 / NCIMB 9086 / R18194 / 383)</name>
    <dbReference type="NCBI Taxonomy" id="482957"/>
    <lineage>
        <taxon>Bacteria</taxon>
        <taxon>Pseudomonadati</taxon>
        <taxon>Pseudomonadota</taxon>
        <taxon>Betaproteobacteria</taxon>
        <taxon>Burkholderiales</taxon>
        <taxon>Burkholderiaceae</taxon>
        <taxon>Burkholderia</taxon>
        <taxon>Burkholderia cepacia complex</taxon>
    </lineage>
</organism>
<evidence type="ECO:0000255" key="1">
    <source>
        <dbReference type="HAMAP-Rule" id="MF_00318"/>
    </source>
</evidence>
<keyword id="KW-0963">Cytoplasm</keyword>
<keyword id="KW-0324">Glycolysis</keyword>
<keyword id="KW-0456">Lyase</keyword>
<keyword id="KW-0460">Magnesium</keyword>
<keyword id="KW-0479">Metal-binding</keyword>
<keyword id="KW-0964">Secreted</keyword>
<name>ENO_BURL3</name>
<feature type="chain" id="PRO_0000267009" description="Enolase">
    <location>
        <begin position="1"/>
        <end position="427"/>
    </location>
</feature>
<feature type="active site" description="Proton donor" evidence="1">
    <location>
        <position position="205"/>
    </location>
</feature>
<feature type="active site" description="Proton acceptor" evidence="1">
    <location>
        <position position="337"/>
    </location>
</feature>
<feature type="binding site" evidence="1">
    <location>
        <position position="163"/>
    </location>
    <ligand>
        <name>(2R)-2-phosphoglycerate</name>
        <dbReference type="ChEBI" id="CHEBI:58289"/>
    </ligand>
</feature>
<feature type="binding site" evidence="1">
    <location>
        <position position="242"/>
    </location>
    <ligand>
        <name>Mg(2+)</name>
        <dbReference type="ChEBI" id="CHEBI:18420"/>
    </ligand>
</feature>
<feature type="binding site" evidence="1">
    <location>
        <position position="285"/>
    </location>
    <ligand>
        <name>Mg(2+)</name>
        <dbReference type="ChEBI" id="CHEBI:18420"/>
    </ligand>
</feature>
<feature type="binding site" evidence="1">
    <location>
        <position position="312"/>
    </location>
    <ligand>
        <name>Mg(2+)</name>
        <dbReference type="ChEBI" id="CHEBI:18420"/>
    </ligand>
</feature>
<feature type="binding site" evidence="1">
    <location>
        <position position="337"/>
    </location>
    <ligand>
        <name>(2R)-2-phosphoglycerate</name>
        <dbReference type="ChEBI" id="CHEBI:58289"/>
    </ligand>
</feature>
<feature type="binding site" evidence="1">
    <location>
        <position position="366"/>
    </location>
    <ligand>
        <name>(2R)-2-phosphoglycerate</name>
        <dbReference type="ChEBI" id="CHEBI:58289"/>
    </ligand>
</feature>
<feature type="binding site" evidence="1">
    <location>
        <position position="367"/>
    </location>
    <ligand>
        <name>(2R)-2-phosphoglycerate</name>
        <dbReference type="ChEBI" id="CHEBI:58289"/>
    </ligand>
</feature>
<feature type="binding site" evidence="1">
    <location>
        <position position="388"/>
    </location>
    <ligand>
        <name>(2R)-2-phosphoglycerate</name>
        <dbReference type="ChEBI" id="CHEBI:58289"/>
    </ligand>
</feature>
<dbReference type="EC" id="4.2.1.11" evidence="1"/>
<dbReference type="EMBL" id="CP000151">
    <property type="protein sequence ID" value="ABB09007.1"/>
    <property type="molecule type" value="Genomic_DNA"/>
</dbReference>
<dbReference type="RefSeq" id="WP_011352544.1">
    <property type="nucleotide sequence ID" value="NZ_LDWP01000035.1"/>
</dbReference>
<dbReference type="SMR" id="Q39EV9"/>
<dbReference type="GeneID" id="93191467"/>
<dbReference type="KEGG" id="bur:Bcep18194_A5413"/>
<dbReference type="HOGENOM" id="CLU_031223_2_1_4"/>
<dbReference type="UniPathway" id="UPA00109">
    <property type="reaction ID" value="UER00187"/>
</dbReference>
<dbReference type="Proteomes" id="UP000002705">
    <property type="component" value="Chromosome 1"/>
</dbReference>
<dbReference type="GO" id="GO:0009986">
    <property type="term" value="C:cell surface"/>
    <property type="evidence" value="ECO:0007669"/>
    <property type="project" value="UniProtKB-SubCell"/>
</dbReference>
<dbReference type="GO" id="GO:0005576">
    <property type="term" value="C:extracellular region"/>
    <property type="evidence" value="ECO:0007669"/>
    <property type="project" value="UniProtKB-SubCell"/>
</dbReference>
<dbReference type="GO" id="GO:0000015">
    <property type="term" value="C:phosphopyruvate hydratase complex"/>
    <property type="evidence" value="ECO:0007669"/>
    <property type="project" value="InterPro"/>
</dbReference>
<dbReference type="GO" id="GO:0000287">
    <property type="term" value="F:magnesium ion binding"/>
    <property type="evidence" value="ECO:0007669"/>
    <property type="project" value="UniProtKB-UniRule"/>
</dbReference>
<dbReference type="GO" id="GO:0004634">
    <property type="term" value="F:phosphopyruvate hydratase activity"/>
    <property type="evidence" value="ECO:0007669"/>
    <property type="project" value="UniProtKB-UniRule"/>
</dbReference>
<dbReference type="GO" id="GO:0006096">
    <property type="term" value="P:glycolytic process"/>
    <property type="evidence" value="ECO:0007669"/>
    <property type="project" value="UniProtKB-UniRule"/>
</dbReference>
<dbReference type="CDD" id="cd03313">
    <property type="entry name" value="enolase"/>
    <property type="match status" value="1"/>
</dbReference>
<dbReference type="FunFam" id="3.20.20.120:FF:000001">
    <property type="entry name" value="Enolase"/>
    <property type="match status" value="1"/>
</dbReference>
<dbReference type="FunFam" id="3.30.390.10:FF:000001">
    <property type="entry name" value="Enolase"/>
    <property type="match status" value="1"/>
</dbReference>
<dbReference type="Gene3D" id="3.20.20.120">
    <property type="entry name" value="Enolase-like C-terminal domain"/>
    <property type="match status" value="1"/>
</dbReference>
<dbReference type="Gene3D" id="3.30.390.10">
    <property type="entry name" value="Enolase-like, N-terminal domain"/>
    <property type="match status" value="1"/>
</dbReference>
<dbReference type="HAMAP" id="MF_00318">
    <property type="entry name" value="Enolase"/>
    <property type="match status" value="1"/>
</dbReference>
<dbReference type="InterPro" id="IPR000941">
    <property type="entry name" value="Enolase"/>
</dbReference>
<dbReference type="InterPro" id="IPR036849">
    <property type="entry name" value="Enolase-like_C_sf"/>
</dbReference>
<dbReference type="InterPro" id="IPR029017">
    <property type="entry name" value="Enolase-like_N"/>
</dbReference>
<dbReference type="InterPro" id="IPR020810">
    <property type="entry name" value="Enolase_C"/>
</dbReference>
<dbReference type="InterPro" id="IPR020809">
    <property type="entry name" value="Enolase_CS"/>
</dbReference>
<dbReference type="InterPro" id="IPR020811">
    <property type="entry name" value="Enolase_N"/>
</dbReference>
<dbReference type="NCBIfam" id="TIGR01060">
    <property type="entry name" value="eno"/>
    <property type="match status" value="1"/>
</dbReference>
<dbReference type="PANTHER" id="PTHR11902">
    <property type="entry name" value="ENOLASE"/>
    <property type="match status" value="1"/>
</dbReference>
<dbReference type="PANTHER" id="PTHR11902:SF1">
    <property type="entry name" value="ENOLASE"/>
    <property type="match status" value="1"/>
</dbReference>
<dbReference type="Pfam" id="PF00113">
    <property type="entry name" value="Enolase_C"/>
    <property type="match status" value="1"/>
</dbReference>
<dbReference type="Pfam" id="PF03952">
    <property type="entry name" value="Enolase_N"/>
    <property type="match status" value="1"/>
</dbReference>
<dbReference type="PIRSF" id="PIRSF001400">
    <property type="entry name" value="Enolase"/>
    <property type="match status" value="1"/>
</dbReference>
<dbReference type="PRINTS" id="PR00148">
    <property type="entry name" value="ENOLASE"/>
</dbReference>
<dbReference type="SFLD" id="SFLDS00001">
    <property type="entry name" value="Enolase"/>
    <property type="match status" value="1"/>
</dbReference>
<dbReference type="SFLD" id="SFLDF00002">
    <property type="entry name" value="enolase"/>
    <property type="match status" value="1"/>
</dbReference>
<dbReference type="SMART" id="SM01192">
    <property type="entry name" value="Enolase_C"/>
    <property type="match status" value="1"/>
</dbReference>
<dbReference type="SMART" id="SM01193">
    <property type="entry name" value="Enolase_N"/>
    <property type="match status" value="1"/>
</dbReference>
<dbReference type="SUPFAM" id="SSF51604">
    <property type="entry name" value="Enolase C-terminal domain-like"/>
    <property type="match status" value="1"/>
</dbReference>
<dbReference type="SUPFAM" id="SSF54826">
    <property type="entry name" value="Enolase N-terminal domain-like"/>
    <property type="match status" value="1"/>
</dbReference>
<dbReference type="PROSITE" id="PS00164">
    <property type="entry name" value="ENOLASE"/>
    <property type="match status" value="1"/>
</dbReference>
<proteinExistence type="inferred from homology"/>
<protein>
    <recommendedName>
        <fullName evidence="1">Enolase</fullName>
        <ecNumber evidence="1">4.2.1.11</ecNumber>
    </recommendedName>
    <alternativeName>
        <fullName evidence="1">2-phospho-D-glycerate hydro-lyase</fullName>
    </alternativeName>
    <alternativeName>
        <fullName evidence="1">2-phosphoglycerate dehydratase</fullName>
    </alternativeName>
</protein>
<comment type="function">
    <text evidence="1">Catalyzes the reversible conversion of 2-phosphoglycerate (2-PG) into phosphoenolpyruvate (PEP). It is essential for the degradation of carbohydrates via glycolysis.</text>
</comment>
<comment type="catalytic activity">
    <reaction evidence="1">
        <text>(2R)-2-phosphoglycerate = phosphoenolpyruvate + H2O</text>
        <dbReference type="Rhea" id="RHEA:10164"/>
        <dbReference type="ChEBI" id="CHEBI:15377"/>
        <dbReference type="ChEBI" id="CHEBI:58289"/>
        <dbReference type="ChEBI" id="CHEBI:58702"/>
        <dbReference type="EC" id="4.2.1.11"/>
    </reaction>
</comment>
<comment type="cofactor">
    <cofactor evidence="1">
        <name>Mg(2+)</name>
        <dbReference type="ChEBI" id="CHEBI:18420"/>
    </cofactor>
    <text evidence="1">Binds a second Mg(2+) ion via substrate during catalysis.</text>
</comment>
<comment type="pathway">
    <text evidence="1">Carbohydrate degradation; glycolysis; pyruvate from D-glyceraldehyde 3-phosphate: step 4/5.</text>
</comment>
<comment type="subcellular location">
    <subcellularLocation>
        <location evidence="1">Cytoplasm</location>
    </subcellularLocation>
    <subcellularLocation>
        <location evidence="1">Secreted</location>
    </subcellularLocation>
    <subcellularLocation>
        <location evidence="1">Cell surface</location>
    </subcellularLocation>
    <text evidence="1">Fractions of enolase are present in both the cytoplasm and on the cell surface.</text>
</comment>
<comment type="similarity">
    <text evidence="1">Belongs to the enolase family.</text>
</comment>
<gene>
    <name evidence="1" type="primary">eno</name>
    <name type="ordered locus">Bcep18194_A5413</name>
</gene>
<accession>Q39EV9</accession>
<reference key="1">
    <citation type="submission" date="2005-10" db="EMBL/GenBank/DDBJ databases">
        <title>Complete sequence of chromosome 1 of Burkholderia sp. 383.</title>
        <authorList>
            <consortium name="US DOE Joint Genome Institute"/>
            <person name="Copeland A."/>
            <person name="Lucas S."/>
            <person name="Lapidus A."/>
            <person name="Barry K."/>
            <person name="Detter J.C."/>
            <person name="Glavina T."/>
            <person name="Hammon N."/>
            <person name="Israni S."/>
            <person name="Pitluck S."/>
            <person name="Chain P."/>
            <person name="Malfatti S."/>
            <person name="Shin M."/>
            <person name="Vergez L."/>
            <person name="Schmutz J."/>
            <person name="Larimer F."/>
            <person name="Land M."/>
            <person name="Kyrpides N."/>
            <person name="Lykidis A."/>
            <person name="Richardson P."/>
        </authorList>
    </citation>
    <scope>NUCLEOTIDE SEQUENCE [LARGE SCALE GENOMIC DNA]</scope>
    <source>
        <strain>ATCC 17760 / DSM 23089 / LMG 22485 / NCIMB 9086 / R18194 / 383</strain>
    </source>
</reference>
<sequence>MSAIVDIIGREILDSRGNPTVECDVLLESGTMGRAAVPSGASTGSREAIELRDGEAGRYNGKGVLKAVEHINTEISEAIMGLDASEQAFLDKTLLELDGTDNKSRLGANAMLAVSMAVAKAAAEEAGLPLYRYFGGSGAMQLPVPMMNIVNGGAHANNSLDIQEFMIVPVSQPTFREALRCGAEVFHALKKILSDRGMSTAVGDEGGFAPNFGSNDECLSTILQAIEKAGYRAGEDVLLALDCAASEFYHDGKYQLAGEGLQLSSAEFTDYLATLADKFPIVSIEDGMHESDWEGWKLLTDRLGKKVQLVGDDLFVTNTRILKEGIEKGIANSILIKINQIGTLTETFAAIEMAKRAGYTAVISHRSGETEDSTIADIAVGLNAGQIKTGSLSRSDRISKYNQLLRIEEDLGDIASYPGKSAFYNLR</sequence>